<keyword id="KW-0648">Protein biosynthesis</keyword>
<keyword id="KW-0808">Transferase</keyword>
<proteinExistence type="inferred from homology"/>
<comment type="function">
    <text evidence="1">Attaches a formyl group to the free amino group of methionyl-tRNA(fMet). The formyl group appears to play a dual role in the initiator identity of N-formylmethionyl-tRNA by promoting its recognition by IF2 and preventing the misappropriation of this tRNA by the elongation apparatus.</text>
</comment>
<comment type="catalytic activity">
    <reaction evidence="1">
        <text>L-methionyl-tRNA(fMet) + (6R)-10-formyltetrahydrofolate = N-formyl-L-methionyl-tRNA(fMet) + (6S)-5,6,7,8-tetrahydrofolate + H(+)</text>
        <dbReference type="Rhea" id="RHEA:24380"/>
        <dbReference type="Rhea" id="RHEA-COMP:9952"/>
        <dbReference type="Rhea" id="RHEA-COMP:9953"/>
        <dbReference type="ChEBI" id="CHEBI:15378"/>
        <dbReference type="ChEBI" id="CHEBI:57453"/>
        <dbReference type="ChEBI" id="CHEBI:78530"/>
        <dbReference type="ChEBI" id="CHEBI:78844"/>
        <dbReference type="ChEBI" id="CHEBI:195366"/>
        <dbReference type="EC" id="2.1.2.9"/>
    </reaction>
</comment>
<comment type="similarity">
    <text evidence="1">Belongs to the Fmt family.</text>
</comment>
<evidence type="ECO:0000255" key="1">
    <source>
        <dbReference type="HAMAP-Rule" id="MF_00182"/>
    </source>
</evidence>
<organism>
    <name type="scientific">Ureaplasma urealyticum serovar 10 (strain ATCC 33699 / Western)</name>
    <dbReference type="NCBI Taxonomy" id="565575"/>
    <lineage>
        <taxon>Bacteria</taxon>
        <taxon>Bacillati</taxon>
        <taxon>Mycoplasmatota</taxon>
        <taxon>Mycoplasmoidales</taxon>
        <taxon>Mycoplasmoidaceae</taxon>
        <taxon>Ureaplasma</taxon>
    </lineage>
</organism>
<reference key="1">
    <citation type="submission" date="2008-10" db="EMBL/GenBank/DDBJ databases">
        <title>Genome sequence of Ureaplasma urealyticum serovar 10 ATCC-33699.</title>
        <authorList>
            <person name="Shrivastava S."/>
            <person name="Methe B.A."/>
            <person name="Glass J."/>
            <person name="White K."/>
            <person name="Duffy L.B."/>
        </authorList>
    </citation>
    <scope>NUCLEOTIDE SEQUENCE [LARGE SCALE GENOMIC DNA]</scope>
    <source>
        <strain>ATCC 33699 / Western</strain>
    </source>
</reference>
<name>FMT_UREU1</name>
<dbReference type="EC" id="2.1.2.9" evidence="1"/>
<dbReference type="EMBL" id="CP001184">
    <property type="protein sequence ID" value="ACI59933.1"/>
    <property type="molecule type" value="Genomic_DNA"/>
</dbReference>
<dbReference type="RefSeq" id="WP_004025631.1">
    <property type="nucleotide sequence ID" value="NC_011374.1"/>
</dbReference>
<dbReference type="SMR" id="B5ZBV9"/>
<dbReference type="STRING" id="565575.UUR10_0508"/>
<dbReference type="GeneID" id="93848975"/>
<dbReference type="KEGG" id="uue:UUR10_0508"/>
<dbReference type="eggNOG" id="COG0223">
    <property type="taxonomic scope" value="Bacteria"/>
</dbReference>
<dbReference type="HOGENOM" id="CLU_033347_1_1_14"/>
<dbReference type="OrthoDB" id="9802815at2"/>
<dbReference type="Proteomes" id="UP000002018">
    <property type="component" value="Chromosome"/>
</dbReference>
<dbReference type="GO" id="GO:0005829">
    <property type="term" value="C:cytosol"/>
    <property type="evidence" value="ECO:0007669"/>
    <property type="project" value="TreeGrafter"/>
</dbReference>
<dbReference type="GO" id="GO:0004479">
    <property type="term" value="F:methionyl-tRNA formyltransferase activity"/>
    <property type="evidence" value="ECO:0007669"/>
    <property type="project" value="UniProtKB-UniRule"/>
</dbReference>
<dbReference type="CDD" id="cd08646">
    <property type="entry name" value="FMT_core_Met-tRNA-FMT_N"/>
    <property type="match status" value="1"/>
</dbReference>
<dbReference type="CDD" id="cd08704">
    <property type="entry name" value="Met_tRNA_FMT_C"/>
    <property type="match status" value="1"/>
</dbReference>
<dbReference type="Gene3D" id="3.40.50.12230">
    <property type="match status" value="1"/>
</dbReference>
<dbReference type="HAMAP" id="MF_00182">
    <property type="entry name" value="Formyl_trans"/>
    <property type="match status" value="1"/>
</dbReference>
<dbReference type="InterPro" id="IPR005794">
    <property type="entry name" value="Fmt"/>
</dbReference>
<dbReference type="InterPro" id="IPR005793">
    <property type="entry name" value="Formyl_trans_C"/>
</dbReference>
<dbReference type="InterPro" id="IPR002376">
    <property type="entry name" value="Formyl_transf_N"/>
</dbReference>
<dbReference type="InterPro" id="IPR036477">
    <property type="entry name" value="Formyl_transf_N_sf"/>
</dbReference>
<dbReference type="InterPro" id="IPR011034">
    <property type="entry name" value="Formyl_transferase-like_C_sf"/>
</dbReference>
<dbReference type="InterPro" id="IPR044135">
    <property type="entry name" value="Met-tRNA-FMT_C"/>
</dbReference>
<dbReference type="InterPro" id="IPR041711">
    <property type="entry name" value="Met-tRNA-FMT_N"/>
</dbReference>
<dbReference type="NCBIfam" id="TIGR00460">
    <property type="entry name" value="fmt"/>
    <property type="match status" value="1"/>
</dbReference>
<dbReference type="PANTHER" id="PTHR11138">
    <property type="entry name" value="METHIONYL-TRNA FORMYLTRANSFERASE"/>
    <property type="match status" value="1"/>
</dbReference>
<dbReference type="PANTHER" id="PTHR11138:SF5">
    <property type="entry name" value="METHIONYL-TRNA FORMYLTRANSFERASE, MITOCHONDRIAL"/>
    <property type="match status" value="1"/>
</dbReference>
<dbReference type="Pfam" id="PF02911">
    <property type="entry name" value="Formyl_trans_C"/>
    <property type="match status" value="1"/>
</dbReference>
<dbReference type="Pfam" id="PF00551">
    <property type="entry name" value="Formyl_trans_N"/>
    <property type="match status" value="1"/>
</dbReference>
<dbReference type="SUPFAM" id="SSF50486">
    <property type="entry name" value="FMT C-terminal domain-like"/>
    <property type="match status" value="1"/>
</dbReference>
<dbReference type="SUPFAM" id="SSF53328">
    <property type="entry name" value="Formyltransferase"/>
    <property type="match status" value="1"/>
</dbReference>
<sequence>MKYNVMFFGTPEIAKIVLETLFNMPEVNLIGVVSQPDSHFDRKKNVVYSPVKQFCLDHDIKLFQPQKIKEIEEEIRSLAPDIIITCAFGQFINQGIIDIPKYKIVNVHASLLPKLRGGAPIHYAILNGDLQTGITLMHTIKKMDAGNILFQRSLAINEQTTTKILTLELANLGALMIKEHFLELVKSDLVGIQQDENDVSFAYNIQKNQNIIDFNKPAFFVNRFVNAMYDKPIAIMEYNDVLIKVHQIKITNQKSTQKPGTIAISKHQIFVSTQDFNVELLLIQLPNKKPLAPKALLNGKNPFSN</sequence>
<gene>
    <name evidence="1" type="primary">fmt</name>
    <name type="ordered locus">UUR10_0508</name>
</gene>
<protein>
    <recommendedName>
        <fullName evidence="1">Methionyl-tRNA formyltransferase</fullName>
        <ecNumber evidence="1">2.1.2.9</ecNumber>
    </recommendedName>
</protein>
<accession>B5ZBV9</accession>
<feature type="chain" id="PRO_1000098458" description="Methionyl-tRNA formyltransferase">
    <location>
        <begin position="1"/>
        <end position="305"/>
    </location>
</feature>
<feature type="binding site" evidence="1">
    <location>
        <begin position="110"/>
        <end position="113"/>
    </location>
    <ligand>
        <name>(6S)-5,6,7,8-tetrahydrofolate</name>
        <dbReference type="ChEBI" id="CHEBI:57453"/>
    </ligand>
</feature>